<evidence type="ECO:0000250" key="1"/>
<evidence type="ECO:0000255" key="2">
    <source>
        <dbReference type="PROSITE-ProRule" id="PRU00080"/>
    </source>
</evidence>
<evidence type="ECO:0000256" key="3">
    <source>
        <dbReference type="SAM" id="MobiDB-lite"/>
    </source>
</evidence>
<evidence type="ECO:0000305" key="4"/>
<gene>
    <name type="primary">sconB</name>
    <name type="ORF">TRV_03480</name>
</gene>
<accession>D4D8P3</accession>
<dbReference type="EMBL" id="ACYE01000180">
    <property type="protein sequence ID" value="EFE41798.1"/>
    <property type="molecule type" value="Genomic_DNA"/>
</dbReference>
<dbReference type="RefSeq" id="XP_003022416.1">
    <property type="nucleotide sequence ID" value="XM_003022370.1"/>
</dbReference>
<dbReference type="SMR" id="D4D8P3"/>
<dbReference type="GeneID" id="9580963"/>
<dbReference type="KEGG" id="tve:TRV_03480"/>
<dbReference type="HOGENOM" id="CLU_000288_103_1_1"/>
<dbReference type="OrthoDB" id="305at34384"/>
<dbReference type="UniPathway" id="UPA00143"/>
<dbReference type="Proteomes" id="UP000008383">
    <property type="component" value="Unassembled WGS sequence"/>
</dbReference>
<dbReference type="GO" id="GO:0016567">
    <property type="term" value="P:protein ubiquitination"/>
    <property type="evidence" value="ECO:0007669"/>
    <property type="project" value="UniProtKB-UniPathway"/>
</dbReference>
<dbReference type="CDD" id="cd22147">
    <property type="entry name" value="F-box_SpPof1-like"/>
    <property type="match status" value="1"/>
</dbReference>
<dbReference type="CDD" id="cd00200">
    <property type="entry name" value="WD40"/>
    <property type="match status" value="1"/>
</dbReference>
<dbReference type="FunFam" id="1.20.1280.50:FF:000016">
    <property type="entry name" value="E3 ubiquitin ligase complex SCF subunit sconB"/>
    <property type="match status" value="1"/>
</dbReference>
<dbReference type="FunFam" id="2.130.10.10:FF:000715">
    <property type="entry name" value="F-box protein MET30"/>
    <property type="match status" value="1"/>
</dbReference>
<dbReference type="Gene3D" id="1.20.1280.50">
    <property type="match status" value="1"/>
</dbReference>
<dbReference type="Gene3D" id="2.130.10.10">
    <property type="entry name" value="YVTN repeat-like/Quinoprotein amine dehydrogenase"/>
    <property type="match status" value="3"/>
</dbReference>
<dbReference type="InterPro" id="IPR036047">
    <property type="entry name" value="F-box-like_dom_sf"/>
</dbReference>
<dbReference type="InterPro" id="IPR001810">
    <property type="entry name" value="F-box_dom"/>
</dbReference>
<dbReference type="InterPro" id="IPR020472">
    <property type="entry name" value="G-protein_beta_WD-40_rep"/>
</dbReference>
<dbReference type="InterPro" id="IPR011047">
    <property type="entry name" value="Quinoprotein_ADH-like_sf"/>
</dbReference>
<dbReference type="InterPro" id="IPR051075">
    <property type="entry name" value="SCF_subunit_WD-repeat"/>
</dbReference>
<dbReference type="InterPro" id="IPR015943">
    <property type="entry name" value="WD40/YVTN_repeat-like_dom_sf"/>
</dbReference>
<dbReference type="InterPro" id="IPR019775">
    <property type="entry name" value="WD40_repeat_CS"/>
</dbReference>
<dbReference type="InterPro" id="IPR001680">
    <property type="entry name" value="WD40_rpt"/>
</dbReference>
<dbReference type="PANTHER" id="PTHR19872">
    <property type="entry name" value="UBIQUITIN LIGASE SPECIFICITY FACTOR/HREP PROTEIN"/>
    <property type="match status" value="1"/>
</dbReference>
<dbReference type="PANTHER" id="PTHR19872:SF9">
    <property type="entry name" value="UBIQUITIN-BINDING SDF UBIQUITIN LIGASE COMPLEX SUBUNIT"/>
    <property type="match status" value="1"/>
</dbReference>
<dbReference type="Pfam" id="PF12937">
    <property type="entry name" value="F-box-like"/>
    <property type="match status" value="1"/>
</dbReference>
<dbReference type="Pfam" id="PF00400">
    <property type="entry name" value="WD40"/>
    <property type="match status" value="6"/>
</dbReference>
<dbReference type="PRINTS" id="PR00320">
    <property type="entry name" value="GPROTEINBRPT"/>
</dbReference>
<dbReference type="SMART" id="SM00256">
    <property type="entry name" value="FBOX"/>
    <property type="match status" value="1"/>
</dbReference>
<dbReference type="SMART" id="SM00320">
    <property type="entry name" value="WD40"/>
    <property type="match status" value="7"/>
</dbReference>
<dbReference type="SUPFAM" id="SSF81383">
    <property type="entry name" value="F-box domain"/>
    <property type="match status" value="1"/>
</dbReference>
<dbReference type="SUPFAM" id="SSF50998">
    <property type="entry name" value="Quinoprotein alcohol dehydrogenase-like"/>
    <property type="match status" value="1"/>
</dbReference>
<dbReference type="PROSITE" id="PS50181">
    <property type="entry name" value="FBOX"/>
    <property type="match status" value="1"/>
</dbReference>
<dbReference type="PROSITE" id="PS00678">
    <property type="entry name" value="WD_REPEATS_1"/>
    <property type="match status" value="4"/>
</dbReference>
<dbReference type="PROSITE" id="PS50082">
    <property type="entry name" value="WD_REPEATS_2"/>
    <property type="match status" value="7"/>
</dbReference>
<dbReference type="PROSITE" id="PS50294">
    <property type="entry name" value="WD_REPEATS_REGION"/>
    <property type="match status" value="1"/>
</dbReference>
<feature type="chain" id="PRO_0000397257" description="Probable E3 ubiquitin ligase complex SCF subunit sconB">
    <location>
        <begin position="1"/>
        <end position="663"/>
    </location>
</feature>
<feature type="domain" description="F-box" evidence="2">
    <location>
        <begin position="195"/>
        <end position="241"/>
    </location>
</feature>
<feature type="repeat" description="WD 1">
    <location>
        <begin position="320"/>
        <end position="359"/>
    </location>
</feature>
<feature type="repeat" description="WD 2">
    <location>
        <begin position="361"/>
        <end position="399"/>
    </location>
</feature>
<feature type="repeat" description="WD 3">
    <location>
        <begin position="400"/>
        <end position="437"/>
    </location>
</feature>
<feature type="repeat" description="WD 4">
    <location>
        <begin position="439"/>
        <end position="480"/>
    </location>
</feature>
<feature type="repeat" description="WD 5">
    <location>
        <begin position="544"/>
        <end position="589"/>
    </location>
</feature>
<feature type="repeat" description="WD 6">
    <location>
        <begin position="592"/>
        <end position="629"/>
    </location>
</feature>
<feature type="repeat" description="WD 7">
    <location>
        <begin position="632"/>
        <end position="663"/>
    </location>
</feature>
<feature type="region of interest" description="Disordered" evidence="3">
    <location>
        <begin position="1"/>
        <end position="78"/>
    </location>
</feature>
<feature type="region of interest" description="Disordered" evidence="3">
    <location>
        <begin position="502"/>
        <end position="547"/>
    </location>
</feature>
<feature type="compositionally biased region" description="Polar residues" evidence="3">
    <location>
        <begin position="1"/>
        <end position="15"/>
    </location>
</feature>
<feature type="compositionally biased region" description="Polar residues" evidence="3">
    <location>
        <begin position="56"/>
        <end position="77"/>
    </location>
</feature>
<feature type="compositionally biased region" description="Basic and acidic residues" evidence="3">
    <location>
        <begin position="502"/>
        <end position="522"/>
    </location>
</feature>
<feature type="compositionally biased region" description="Polar residues" evidence="3">
    <location>
        <begin position="526"/>
        <end position="541"/>
    </location>
</feature>
<protein>
    <recommendedName>
        <fullName>Probable E3 ubiquitin ligase complex SCF subunit sconB</fullName>
    </recommendedName>
    <alternativeName>
        <fullName>Sulfur controller B</fullName>
    </alternativeName>
    <alternativeName>
        <fullName>Sulfur metabolite repression control protein B</fullName>
    </alternativeName>
</protein>
<organism>
    <name type="scientific">Trichophyton verrucosum (strain HKI 0517)</name>
    <dbReference type="NCBI Taxonomy" id="663202"/>
    <lineage>
        <taxon>Eukaryota</taxon>
        <taxon>Fungi</taxon>
        <taxon>Dikarya</taxon>
        <taxon>Ascomycota</taxon>
        <taxon>Pezizomycotina</taxon>
        <taxon>Eurotiomycetes</taxon>
        <taxon>Eurotiomycetidae</taxon>
        <taxon>Onygenales</taxon>
        <taxon>Arthrodermataceae</taxon>
        <taxon>Trichophyton</taxon>
    </lineage>
</organism>
<name>SCONB_TRIVH</name>
<proteinExistence type="inferred from homology"/>
<reference key="1">
    <citation type="journal article" date="2011" name="Genome Biol.">
        <title>Comparative and functional genomics provide insights into the pathogenicity of dermatophytic fungi.</title>
        <authorList>
            <person name="Burmester A."/>
            <person name="Shelest E."/>
            <person name="Gloeckner G."/>
            <person name="Heddergott C."/>
            <person name="Schindler S."/>
            <person name="Staib P."/>
            <person name="Heidel A."/>
            <person name="Felder M."/>
            <person name="Petzold A."/>
            <person name="Szafranski K."/>
            <person name="Feuermann M."/>
            <person name="Pedruzzi I."/>
            <person name="Priebe S."/>
            <person name="Groth M."/>
            <person name="Winkler R."/>
            <person name="Li W."/>
            <person name="Kniemeyer O."/>
            <person name="Schroeckh V."/>
            <person name="Hertweck C."/>
            <person name="Hube B."/>
            <person name="White T.C."/>
            <person name="Platzer M."/>
            <person name="Guthke R."/>
            <person name="Heitman J."/>
            <person name="Woestemeyer J."/>
            <person name="Zipfel P.F."/>
            <person name="Monod M."/>
            <person name="Brakhage A.A."/>
        </authorList>
    </citation>
    <scope>NUCLEOTIDE SEQUENCE [LARGE SCALE GENOMIC DNA]</scope>
    <source>
        <strain>HKI 0517</strain>
    </source>
</reference>
<keyword id="KW-0677">Repeat</keyword>
<keyword id="KW-0804">Transcription</keyword>
<keyword id="KW-0805">Transcription regulation</keyword>
<keyword id="KW-0833">Ubl conjugation pathway</keyword>
<keyword id="KW-0853">WD repeat</keyword>
<comment type="function">
    <text evidence="1">Component of the SCF(sconB) E3 ubiquitin ligase complex involved in the regulation of sulfur metabolite repression, probably by mediating the inactivation or degradation of the metR transcription factor.</text>
</comment>
<comment type="pathway">
    <text>Protein modification; protein ubiquitination.</text>
</comment>
<comment type="subunit">
    <text evidence="1">Component of the SCF(sconB) E3 ubiquitin ligase complex.</text>
</comment>
<comment type="similarity">
    <text evidence="4">Belongs to the WD repeat MET30/SCONB/SCON-2 family.</text>
</comment>
<sequence>MDTDNSTLPTEQSAVRETCDRDVTMSPRKRRRLSVSLEPELTEPEAAGTPGERCSTADTPESTASEPRSLFNSTPTEGNIAPFLTKHIKDQHASRNRFAPIDSSLPRRKADSKYCYRHRPDLKCRRQAAEPTVDQMQRDLSTLSQNDQQSIAHFWSLFSAAPSKHRNLMLQGIVAQCCFPQLSFLSASVRDLIRIDFVTALPPEISFKILSYLDTASLCSAAQVSHSWRALADDDVVWHRMCEQHIDRKCEKCGWGLPMLDRKRLKDTKRQVQLRAAGKEIAPNQRPQQQHRPWKAVYMDRFKVGTNWKYGRCTTTIFRGHTNGVMCLQFDDNILATGSYDATIKIWDIETGKEIRTLRGHESTIRCLQFDDTKLISGSLDRTIKVWNWRSGECISTYTGHQGGVLCLHFDSTTLASGSKDNTIKIWNFHDKSTRILRGHADWVNSVKLDTASRTVFSASDDLTVRIWDLDTGKCIHSYAGHVGQVQQVLPLPREFEFKHQSNCADDRSDRLSGSESPDHRGSHGYGSNNAPDQQPNTSAPPTEPMSPLFEALFTEDQGRPAPPRYMLTAALDLTLRLWEVHTGRCLRTFFGHIEGVWGLAADTLRFVSGAQDHMAKVWDPRTGTCERTFTGHRGPVTCVSLSDSRMATGSEDSEVRMYSFKA</sequence>